<evidence type="ECO:0000250" key="1"/>
<evidence type="ECO:0000255" key="2"/>
<evidence type="ECO:0000255" key="3">
    <source>
        <dbReference type="PROSITE-ProRule" id="PRU00434"/>
    </source>
</evidence>
<evidence type="ECO:0000256" key="4">
    <source>
        <dbReference type="SAM" id="MobiDB-lite"/>
    </source>
</evidence>
<evidence type="ECO:0000269" key="5">
    <source>
    </source>
</evidence>
<evidence type="ECO:0000305" key="6"/>
<protein>
    <recommendedName>
        <fullName>ABC transporter G family member 34</fullName>
        <shortName>ABC transporter ABCG.34</shortName>
        <shortName>AtABCG34</shortName>
    </recommendedName>
    <alternativeName>
        <fullName>Pleiotropic drug resistance protein 6</fullName>
    </alternativeName>
</protein>
<accession>Q7PC87</accession>
<accession>Q56YS3</accession>
<accession>Q9SJR6</accession>
<proteinExistence type="evidence at transcript level"/>
<reference key="1">
    <citation type="journal article" date="1999" name="Nature">
        <title>Sequence and analysis of chromosome 2 of the plant Arabidopsis thaliana.</title>
        <authorList>
            <person name="Lin X."/>
            <person name="Kaul S."/>
            <person name="Rounsley S.D."/>
            <person name="Shea T.P."/>
            <person name="Benito M.-I."/>
            <person name="Town C.D."/>
            <person name="Fujii C.Y."/>
            <person name="Mason T.M."/>
            <person name="Bowman C.L."/>
            <person name="Barnstead M.E."/>
            <person name="Feldblyum T.V."/>
            <person name="Buell C.R."/>
            <person name="Ketchum K.A."/>
            <person name="Lee J.J."/>
            <person name="Ronning C.M."/>
            <person name="Koo H.L."/>
            <person name="Moffat K.S."/>
            <person name="Cronin L.A."/>
            <person name="Shen M."/>
            <person name="Pai G."/>
            <person name="Van Aken S."/>
            <person name="Umayam L."/>
            <person name="Tallon L.J."/>
            <person name="Gill J.E."/>
            <person name="Adams M.D."/>
            <person name="Carrera A.J."/>
            <person name="Creasy T.H."/>
            <person name="Goodman H.M."/>
            <person name="Somerville C.R."/>
            <person name="Copenhaver G.P."/>
            <person name="Preuss D."/>
            <person name="Nierman W.C."/>
            <person name="White O."/>
            <person name="Eisen J.A."/>
            <person name="Salzberg S.L."/>
            <person name="Fraser C.M."/>
            <person name="Venter J.C."/>
        </authorList>
    </citation>
    <scope>NUCLEOTIDE SEQUENCE [LARGE SCALE GENOMIC DNA]</scope>
    <source>
        <strain>cv. Columbia</strain>
    </source>
</reference>
<reference key="2">
    <citation type="journal article" date="2017" name="Plant J.">
        <title>Araport11: a complete reannotation of the Arabidopsis thaliana reference genome.</title>
        <authorList>
            <person name="Cheng C.Y."/>
            <person name="Krishnakumar V."/>
            <person name="Chan A.P."/>
            <person name="Thibaud-Nissen F."/>
            <person name="Schobel S."/>
            <person name="Town C.D."/>
        </authorList>
    </citation>
    <scope>GENOME REANNOTATION</scope>
    <source>
        <strain>cv. Columbia</strain>
    </source>
</reference>
<reference key="3">
    <citation type="submission" date="2005-03" db="EMBL/GenBank/DDBJ databases">
        <title>Large-scale analysis of RIKEN Arabidopsis full-length (RAFL) cDNAs.</title>
        <authorList>
            <person name="Totoki Y."/>
            <person name="Seki M."/>
            <person name="Ishida J."/>
            <person name="Nakajima M."/>
            <person name="Enju A."/>
            <person name="Kamiya A."/>
            <person name="Narusaka M."/>
            <person name="Shin-i T."/>
            <person name="Nakagawa M."/>
            <person name="Sakamoto N."/>
            <person name="Oishi K."/>
            <person name="Kohara Y."/>
            <person name="Kobayashi M."/>
            <person name="Toyoda A."/>
            <person name="Sakaki Y."/>
            <person name="Sakurai T."/>
            <person name="Iida K."/>
            <person name="Akiyama K."/>
            <person name="Satou M."/>
            <person name="Toyoda T."/>
            <person name="Konagaya A."/>
            <person name="Carninci P."/>
            <person name="Kawai J."/>
            <person name="Hayashizaki Y."/>
            <person name="Shinozaki K."/>
        </authorList>
    </citation>
    <scope>NUCLEOTIDE SEQUENCE [LARGE SCALE MRNA] OF 1173-1453</scope>
    <source>
        <strain>cv. Columbia</strain>
    </source>
</reference>
<reference key="4">
    <citation type="journal article" date="2002" name="Planta">
        <title>The plant PDR family of ABC transporters.</title>
        <authorList>
            <person name="van den Brule S."/>
            <person name="Smart C.C."/>
        </authorList>
    </citation>
    <scope>IDENTIFICATION</scope>
    <scope>TISSUE SPECIFICITY</scope>
    <scope>INDUCTION</scope>
</reference>
<reference key="5">
    <citation type="journal article" date="2006" name="FEBS Lett.">
        <title>Organization and function of the plant pleiotropic drug resistance ABC transporter family.</title>
        <authorList>
            <person name="Crouzet J."/>
            <person name="Trombik T."/>
            <person name="Fraysse A.S."/>
            <person name="Boutry M."/>
        </authorList>
    </citation>
    <scope>GENE FAMILY</scope>
    <scope>NOMENCLATURE</scope>
</reference>
<reference key="6">
    <citation type="journal article" date="2008" name="Trends Plant Sci.">
        <title>Plant ABC proteins - a unified nomenclature and updated inventory.</title>
        <authorList>
            <person name="Verrier P.J."/>
            <person name="Bird D."/>
            <person name="Burla B."/>
            <person name="Dassa E."/>
            <person name="Forestier C."/>
            <person name="Geisler M."/>
            <person name="Klein M."/>
            <person name="Kolukisaoglu H.U."/>
            <person name="Lee Y."/>
            <person name="Martinoia E."/>
            <person name="Murphy A."/>
            <person name="Rea P.A."/>
            <person name="Samuels L."/>
            <person name="Schulz B."/>
            <person name="Spalding E.J."/>
            <person name="Yazaki K."/>
            <person name="Theodoulou F.L."/>
        </authorList>
    </citation>
    <scope>GENE FAMILY</scope>
    <scope>NOMENCLATURE</scope>
</reference>
<name>AB34G_ARATH</name>
<dbReference type="EMBL" id="AC006919">
    <property type="protein sequence ID" value="AAD24623.1"/>
    <property type="status" value="ALT_SEQ"/>
    <property type="molecule type" value="Genomic_DNA"/>
</dbReference>
<dbReference type="EMBL" id="AC006921">
    <property type="protein sequence ID" value="AAM15320.1"/>
    <property type="status" value="ALT_SEQ"/>
    <property type="molecule type" value="Genomic_DNA"/>
</dbReference>
<dbReference type="EMBL" id="CP002685">
    <property type="protein sequence ID" value="AEC09246.1"/>
    <property type="molecule type" value="Genomic_DNA"/>
</dbReference>
<dbReference type="EMBL" id="AK221248">
    <property type="protein sequence ID" value="BAD93879.1"/>
    <property type="status" value="ALT_INIT"/>
    <property type="molecule type" value="mRNA"/>
</dbReference>
<dbReference type="EMBL" id="BK001005">
    <property type="protein sequence ID" value="DAA00874.1"/>
    <property type="molecule type" value="Genomic_DNA"/>
</dbReference>
<dbReference type="PIR" id="A84780">
    <property type="entry name" value="A84780"/>
</dbReference>
<dbReference type="RefSeq" id="NP_181179.2">
    <property type="nucleotide sequence ID" value="NM_129195.6"/>
</dbReference>
<dbReference type="SMR" id="Q7PC87"/>
<dbReference type="BioGRID" id="3555">
    <property type="interactions" value="3"/>
</dbReference>
<dbReference type="FunCoup" id="Q7PC87">
    <property type="interactions" value="460"/>
</dbReference>
<dbReference type="STRING" id="3702.Q7PC87"/>
<dbReference type="TCDB" id="3.A.1.205.23">
    <property type="family name" value="the atp-binding cassette (abc) superfamily"/>
</dbReference>
<dbReference type="iPTMnet" id="Q7PC87"/>
<dbReference type="PaxDb" id="3702-AT2G36380.1"/>
<dbReference type="ProteomicsDB" id="244512"/>
<dbReference type="EnsemblPlants" id="AT2G36380.1">
    <property type="protein sequence ID" value="AT2G36380.1"/>
    <property type="gene ID" value="AT2G36380"/>
</dbReference>
<dbReference type="GeneID" id="818211"/>
<dbReference type="Gramene" id="AT2G36380.1">
    <property type="protein sequence ID" value="AT2G36380.1"/>
    <property type="gene ID" value="AT2G36380"/>
</dbReference>
<dbReference type="KEGG" id="ath:AT2G36380"/>
<dbReference type="Araport" id="AT2G36380"/>
<dbReference type="TAIR" id="AT2G36380">
    <property type="gene designation" value="ABCG34"/>
</dbReference>
<dbReference type="eggNOG" id="KOG0065">
    <property type="taxonomic scope" value="Eukaryota"/>
</dbReference>
<dbReference type="HOGENOM" id="CLU_000604_35_6_1"/>
<dbReference type="InParanoid" id="Q7PC87"/>
<dbReference type="OMA" id="ACGYFVQ"/>
<dbReference type="OrthoDB" id="66620at2759"/>
<dbReference type="PhylomeDB" id="Q7PC87"/>
<dbReference type="PRO" id="PR:Q7PC87"/>
<dbReference type="Proteomes" id="UP000006548">
    <property type="component" value="Chromosome 2"/>
</dbReference>
<dbReference type="ExpressionAtlas" id="Q7PC87">
    <property type="expression patterns" value="baseline and differential"/>
</dbReference>
<dbReference type="GO" id="GO:0005886">
    <property type="term" value="C:plasma membrane"/>
    <property type="evidence" value="ECO:0007005"/>
    <property type="project" value="TAIR"/>
</dbReference>
<dbReference type="GO" id="GO:0140359">
    <property type="term" value="F:ABC-type transporter activity"/>
    <property type="evidence" value="ECO:0007669"/>
    <property type="project" value="InterPro"/>
</dbReference>
<dbReference type="GO" id="GO:0005524">
    <property type="term" value="F:ATP binding"/>
    <property type="evidence" value="ECO:0007669"/>
    <property type="project" value="UniProtKB-KW"/>
</dbReference>
<dbReference type="GO" id="GO:0016887">
    <property type="term" value="F:ATP hydrolysis activity"/>
    <property type="evidence" value="ECO:0007669"/>
    <property type="project" value="InterPro"/>
</dbReference>
<dbReference type="CDD" id="cd03232">
    <property type="entry name" value="ABCG_PDR_domain2"/>
    <property type="match status" value="1"/>
</dbReference>
<dbReference type="FunFam" id="3.40.50.300:FF:000179">
    <property type="entry name" value="ABC transporter G family member 34"/>
    <property type="match status" value="1"/>
</dbReference>
<dbReference type="FunFam" id="3.40.50.300:FF:000059">
    <property type="entry name" value="ABC transporter G family member 40"/>
    <property type="match status" value="1"/>
</dbReference>
<dbReference type="Gene3D" id="3.40.50.300">
    <property type="entry name" value="P-loop containing nucleotide triphosphate hydrolases"/>
    <property type="match status" value="2"/>
</dbReference>
<dbReference type="InterPro" id="IPR003593">
    <property type="entry name" value="AAA+_ATPase"/>
</dbReference>
<dbReference type="InterPro" id="IPR013525">
    <property type="entry name" value="ABC2_TM"/>
</dbReference>
<dbReference type="InterPro" id="IPR029481">
    <property type="entry name" value="ABC_trans_N"/>
</dbReference>
<dbReference type="InterPro" id="IPR003439">
    <property type="entry name" value="ABC_transporter-like_ATP-bd"/>
</dbReference>
<dbReference type="InterPro" id="IPR043926">
    <property type="entry name" value="ABCG_dom"/>
</dbReference>
<dbReference type="InterPro" id="IPR034003">
    <property type="entry name" value="ABCG_PDR_2"/>
</dbReference>
<dbReference type="InterPro" id="IPR027417">
    <property type="entry name" value="P-loop_NTPase"/>
</dbReference>
<dbReference type="InterPro" id="IPR013581">
    <property type="entry name" value="PDR_assoc"/>
</dbReference>
<dbReference type="PANTHER" id="PTHR19241">
    <property type="entry name" value="ATP-BINDING CASSETTE TRANSPORTER"/>
    <property type="match status" value="1"/>
</dbReference>
<dbReference type="Pfam" id="PF01061">
    <property type="entry name" value="ABC2_membrane"/>
    <property type="match status" value="2"/>
</dbReference>
<dbReference type="Pfam" id="PF19055">
    <property type="entry name" value="ABC2_membrane_7"/>
    <property type="match status" value="2"/>
</dbReference>
<dbReference type="Pfam" id="PF00005">
    <property type="entry name" value="ABC_tran"/>
    <property type="match status" value="2"/>
</dbReference>
<dbReference type="Pfam" id="PF14510">
    <property type="entry name" value="ABC_trans_N"/>
    <property type="match status" value="1"/>
</dbReference>
<dbReference type="Pfam" id="PF08370">
    <property type="entry name" value="PDR_assoc"/>
    <property type="match status" value="1"/>
</dbReference>
<dbReference type="SMART" id="SM00382">
    <property type="entry name" value="AAA"/>
    <property type="match status" value="2"/>
</dbReference>
<dbReference type="SUPFAM" id="SSF52540">
    <property type="entry name" value="P-loop containing nucleoside triphosphate hydrolases"/>
    <property type="match status" value="2"/>
</dbReference>
<dbReference type="PROSITE" id="PS50893">
    <property type="entry name" value="ABC_TRANSPORTER_2"/>
    <property type="match status" value="2"/>
</dbReference>
<organism>
    <name type="scientific">Arabidopsis thaliana</name>
    <name type="common">Mouse-ear cress</name>
    <dbReference type="NCBI Taxonomy" id="3702"/>
    <lineage>
        <taxon>Eukaryota</taxon>
        <taxon>Viridiplantae</taxon>
        <taxon>Streptophyta</taxon>
        <taxon>Embryophyta</taxon>
        <taxon>Tracheophyta</taxon>
        <taxon>Spermatophyta</taxon>
        <taxon>Magnoliopsida</taxon>
        <taxon>eudicotyledons</taxon>
        <taxon>Gunneridae</taxon>
        <taxon>Pentapetalae</taxon>
        <taxon>rosids</taxon>
        <taxon>malvids</taxon>
        <taxon>Brassicales</taxon>
        <taxon>Brassicaceae</taxon>
        <taxon>Camelineae</taxon>
        <taxon>Arabidopsis</taxon>
    </lineage>
</organism>
<gene>
    <name type="primary">ABCG34</name>
    <name type="synonym">PDR6</name>
    <name type="ordered locus">At2g36380</name>
    <name type="ORF">F1O11.1</name>
</gene>
<comment type="function">
    <text evidence="1">May be a general defense protein.</text>
</comment>
<comment type="subcellular location">
    <subcellularLocation>
        <location evidence="1">Membrane</location>
        <topology evidence="1">Multi-pass membrane protein</topology>
    </subcellularLocation>
</comment>
<comment type="tissue specificity">
    <text evidence="5">Expressed in roots at low levels.</text>
</comment>
<comment type="induction">
    <text evidence="5">Induced by cold/dark treatment, 2,4-D, epibrassinolide (EBR), sodium chloride (NaCl) and cadmium (Cd).</text>
</comment>
<comment type="similarity">
    <text evidence="6">Belongs to the ABC transporter superfamily. ABCG family. PDR (TC 3.A.1.205) subfamily.</text>
</comment>
<comment type="sequence caution" evidence="6">
    <conflict type="erroneous gene model prediction">
        <sequence resource="EMBL-CDS" id="AAD24623"/>
    </conflict>
</comment>
<comment type="sequence caution" evidence="6">
    <conflict type="erroneous gene model prediction">
        <sequence resource="EMBL-CDS" id="AAM15320"/>
    </conflict>
</comment>
<comment type="sequence caution" evidence="6">
    <conflict type="erroneous initiation">
        <sequence resource="EMBL-CDS" id="BAD93879"/>
    </conflict>
    <text>Truncated N-terminus.</text>
</comment>
<keyword id="KW-0067">ATP-binding</keyword>
<keyword id="KW-0472">Membrane</keyword>
<keyword id="KW-0547">Nucleotide-binding</keyword>
<keyword id="KW-1185">Reference proteome</keyword>
<keyword id="KW-0677">Repeat</keyword>
<keyword id="KW-0812">Transmembrane</keyword>
<keyword id="KW-1133">Transmembrane helix</keyword>
<keyword id="KW-0813">Transport</keyword>
<sequence>MLGRDEDLVRTMSGRGSLGSTSHRSLAGAASKSFRDVFAPPTDDVFGRSDRREEDDVELRWAALERLPTYDRLRKGMLPQTMVNGKIGLEDVDVTNLAPKEKKHLMEMILKFVEEDNEKFLRRLRERTDRVGIEVPKIEVRYENLSVEGDVRSASRALPTLFNVTLNTIESILGLFHLLPSKKRKIEILKDISGIIKPSRMTLLLGPPSSGKTTLLQALAGKLDDTLQMSGRITYCGHEFREFVPQKTCAYISQHDLHFGEMTVRESLDFSGRCLGVGTRYQLLTELSRREREAGIKPDPEIDAFMKSIAISGQETSLVTDYVLKLLGLDICADTLVGDVMRRGISGGQRKRLTTGEMLVGPATALFMDEISTGLDSSTTFQICKFMRQLVHIADVTMVISLLQPAPETFELFDDIILLSEGQIVYQGSRDNVLEFFEYMGFKCPERKGIADFLQEVTSKKDQEQYWNRREHPYSYVSVHDFSSGFNSFHAGQQLASEFRVPYDKAKTHPAALVTQKYGISNKDLFKACFDREWLLMKRNSFVYVFKTVQITIMSLIAMTVYFRTEMHVGTVQDGQKFYGALFFSLINLMFNGMAELAFTVMRLPVFFKQRDFLFYPPWAFALPGFLLKIPLSLIESVIWIALTYYTIGFAPSAARFFRQLLAYFCVNQMALSLFRFLGALGRTEVIANSGGTLALLVVFVLGGFIISKDDIPSWLTWCYYTSPMMYGQTALVINEFLDERWGSPNNDTRINAKTVGEVLLKSRGFFTEPYWFWICIGALLGFTVLFNFCYIIALMYLNPLGNSKATTVVEEGKDKHKGSHSGTGGSVVELTSTSSHGPKKGMVLPFQPLSLAFNNVNYYVDMPAEMKAQGVEGDRLQLLRDVGGAFRPGVLTALVGVSGAGKTTLMDVLAGRKTGGYVEGSINISGYPKNQATFARVSGYCEQNDIHSPHVTVYESLIYSAWLRLSADIDTKTREMFVEEVMELVELKPLRNSIVGLPGVDGLSTEQRKRLTIAVELVANPSIIFMDEPTSGLDARAAAIVMRTVRNTVDTGRTVVCTIHQPSIDIFESFDELLLMKRGGQVIYAGTLGHHSQKLVEYFEAIEGVPKIKDGYNPATWMLDVTTPSMESQMSVDFAQIFVNSSVNRRNQELIKELSTPPPGSNDLYFRTKYAQPFSTQTKACFWKMYWSNWRYPQYNAIRFLMTVVIGVLFGLLFWQTGTKIEKEQDLNNFFGAMYAAVLFLGATNAATVQPAVAIERTVFYREKAAGMYSAIPYAISQVAVEIMYNTIQTGVYTLILYSMIGYDWTVVKFFWFYYYMLTCFVYFTLYGMMLVALTPNYQIAGICLSFFLSFWNLFSGFLIPRPQIPIWWRWYYWASPVAWTLYGIITSQVGDRDSIVHITGVGDMSLKTLLKNGFGFDYDFLPVVAVVHIAWILIFLFAFAYGIKFLNFQRR</sequence>
<feature type="chain" id="PRO_0000234633" description="ABC transporter G family member 34">
    <location>
        <begin position="1"/>
        <end position="1453"/>
    </location>
</feature>
<feature type="transmembrane region" description="Helical" evidence="2">
    <location>
        <begin position="542"/>
        <end position="562"/>
    </location>
</feature>
<feature type="transmembrane region" description="Helical" evidence="2">
    <location>
        <begin position="582"/>
        <end position="602"/>
    </location>
</feature>
<feature type="transmembrane region" description="Helical" evidence="2">
    <location>
        <begin position="621"/>
        <end position="641"/>
    </location>
</feature>
<feature type="transmembrane region" description="Helical" evidence="2">
    <location>
        <begin position="661"/>
        <end position="681"/>
    </location>
</feature>
<feature type="transmembrane region" description="Helical" evidence="2">
    <location>
        <begin position="687"/>
        <end position="707"/>
    </location>
</feature>
<feature type="transmembrane region" description="Helical" evidence="2">
    <location>
        <begin position="773"/>
        <end position="793"/>
    </location>
</feature>
<feature type="transmembrane region" description="Helical" evidence="2">
    <location>
        <begin position="1196"/>
        <end position="1216"/>
    </location>
</feature>
<feature type="transmembrane region" description="Helical" evidence="2">
    <location>
        <begin position="1230"/>
        <end position="1250"/>
    </location>
</feature>
<feature type="transmembrane region" description="Helical" evidence="2">
    <location>
        <begin position="1289"/>
        <end position="1309"/>
    </location>
</feature>
<feature type="transmembrane region" description="Helical" evidence="2">
    <location>
        <begin position="1311"/>
        <end position="1331"/>
    </location>
</feature>
<feature type="transmembrane region" description="Helical" evidence="2">
    <location>
        <begin position="1341"/>
        <end position="1361"/>
    </location>
</feature>
<feature type="transmembrane region" description="Helical" evidence="2">
    <location>
        <begin position="1366"/>
        <end position="1386"/>
    </location>
</feature>
<feature type="transmembrane region" description="Helical" evidence="2">
    <location>
        <begin position="1422"/>
        <end position="1442"/>
    </location>
</feature>
<feature type="domain" description="ABC transporter 1" evidence="3">
    <location>
        <begin position="173"/>
        <end position="446"/>
    </location>
</feature>
<feature type="domain" description="ABC transmembrane type-2 1">
    <location>
        <begin position="524"/>
        <end position="737"/>
    </location>
</feature>
<feature type="domain" description="ABC transporter 2" evidence="3">
    <location>
        <begin position="852"/>
        <end position="1105"/>
    </location>
</feature>
<feature type="domain" description="ABC transmembrane type-2 2">
    <location>
        <begin position="1177"/>
        <end position="1391"/>
    </location>
</feature>
<feature type="region of interest" description="Disordered" evidence="4">
    <location>
        <begin position="1"/>
        <end position="24"/>
    </location>
</feature>
<feature type="binding site" evidence="3">
    <location>
        <begin position="206"/>
        <end position="213"/>
    </location>
    <ligand>
        <name>ATP</name>
        <dbReference type="ChEBI" id="CHEBI:30616"/>
        <label>1</label>
    </ligand>
</feature>
<feature type="binding site" evidence="3">
    <location>
        <begin position="897"/>
        <end position="904"/>
    </location>
    <ligand>
        <name>ATP</name>
        <dbReference type="ChEBI" id="CHEBI:30616"/>
        <label>2</label>
    </ligand>
</feature>